<comment type="function">
    <text evidence="2">Phosphorylates NAD(+) to produce NADP(+) in a calmodulin calcium-dependent manner (PubMed:31554701). Does not possess activity toward NADH (PubMed:31554701). Has broad specificity for the phosphoryl donor, as ATP, CTP, GTP and UTP can be used interchangeably and produce similar efficiencies (PubMed:31554701). May play a role in producing NADP(H) needed to regulate the elicitor-induced reactive oxygen species (ROS) burst by sustaining the activity of NADPH oxidases (PubMed:31554701). Does not seem to play a role in photosynthesis-driven growth (PubMed:31554701).</text>
</comment>
<comment type="catalytic activity">
    <reaction evidence="2">
        <text>NAD(+) + ATP = ADP + NADP(+) + H(+)</text>
        <dbReference type="Rhea" id="RHEA:18629"/>
        <dbReference type="ChEBI" id="CHEBI:15378"/>
        <dbReference type="ChEBI" id="CHEBI:30616"/>
        <dbReference type="ChEBI" id="CHEBI:57540"/>
        <dbReference type="ChEBI" id="CHEBI:58349"/>
        <dbReference type="ChEBI" id="CHEBI:456216"/>
        <dbReference type="EC" id="2.7.1.23"/>
    </reaction>
    <physiologicalReaction direction="left-to-right" evidence="2">
        <dbReference type="Rhea" id="RHEA:18630"/>
    </physiologicalReaction>
</comment>
<comment type="cofactor">
    <cofactor evidence="2">
        <name>Ca(2+)</name>
        <dbReference type="ChEBI" id="CHEBI:29108"/>
    </cofactor>
</comment>
<comment type="biophysicochemical properties">
    <kinetics>
        <KM evidence="2">203 uM for ATP</KM>
        <KM evidence="2">283 uM for CTP</KM>
        <KM evidence="2">522 uM for GTP</KM>
        <KM evidence="2">207 uM for UTP</KM>
        <KM evidence="2">147 uM for NAD(+)</KM>
    </kinetics>
</comment>
<comment type="subunit">
    <text evidence="2">Interacts with calmodulin (CaM) in a calcium Ca(2+)-dependent manner in vitro.</text>
</comment>
<comment type="subcellular location">
    <subcellularLocation>
        <location evidence="2">Mitochondrion outer membrane</location>
        <topology evidence="2">Peripheral membrane protein</topology>
    </subcellularLocation>
</comment>
<comment type="disruption phenotype">
    <text evidence="2">No visible phenotype under normal growth conditions.</text>
</comment>
<comment type="sequence caution" evidence="4">
    <conflict type="erroneous gene model prediction">
        <sequence resource="EMBL-CDS" id="AAB70448"/>
    </conflict>
</comment>
<comment type="sequence caution" evidence="4">
    <conflict type="erroneous gene model prediction">
        <sequence resource="EMBL-CDS" id="ANM60529"/>
    </conflict>
</comment>
<feature type="chain" id="PRO_0000448694" description="Calmodulin calcium-dependent NAD kinase">
    <location>
        <begin position="1"/>
        <end position="534"/>
    </location>
</feature>
<feature type="region of interest" description="Calmodulin-binding" evidence="2">
    <location>
        <begin position="167"/>
        <end position="196"/>
    </location>
</feature>
<feature type="binding site" evidence="1">
    <location>
        <begin position="238"/>
        <end position="245"/>
    </location>
    <ligand>
        <name>ATP</name>
        <dbReference type="ChEBI" id="CHEBI:30616"/>
    </ligand>
</feature>
<evidence type="ECO:0000250" key="1">
    <source>
        <dbReference type="UniProtKB" id="Q97QZ1"/>
    </source>
</evidence>
<evidence type="ECO:0000269" key="2">
    <source>
    </source>
</evidence>
<evidence type="ECO:0000303" key="3">
    <source>
    </source>
</evidence>
<evidence type="ECO:0000305" key="4"/>
<evidence type="ECO:0000312" key="5">
    <source>
        <dbReference type="Araport" id="AT1G04280"/>
    </source>
</evidence>
<evidence type="ECO:0000312" key="6">
    <source>
        <dbReference type="EMBL" id="AEE27678.1"/>
    </source>
</evidence>
<accession>Q0WUY1</accession>
<accession>Q7DM36</accession>
<accession>Q7GB61</accession>
<reference key="1">
    <citation type="journal article" date="2000" name="Nature">
        <title>Sequence and analysis of chromosome 1 of the plant Arabidopsis thaliana.</title>
        <authorList>
            <person name="Theologis A."/>
            <person name="Ecker J.R."/>
            <person name="Palm C.J."/>
            <person name="Federspiel N.A."/>
            <person name="Kaul S."/>
            <person name="White O."/>
            <person name="Alonso J."/>
            <person name="Altafi H."/>
            <person name="Araujo R."/>
            <person name="Bowman C.L."/>
            <person name="Brooks S.Y."/>
            <person name="Buehler E."/>
            <person name="Chan A."/>
            <person name="Chao Q."/>
            <person name="Chen H."/>
            <person name="Cheuk R.F."/>
            <person name="Chin C.W."/>
            <person name="Chung M.K."/>
            <person name="Conn L."/>
            <person name="Conway A.B."/>
            <person name="Conway A.R."/>
            <person name="Creasy T.H."/>
            <person name="Dewar K."/>
            <person name="Dunn P."/>
            <person name="Etgu P."/>
            <person name="Feldblyum T.V."/>
            <person name="Feng J.-D."/>
            <person name="Fong B."/>
            <person name="Fujii C.Y."/>
            <person name="Gill J.E."/>
            <person name="Goldsmith A.D."/>
            <person name="Haas B."/>
            <person name="Hansen N.F."/>
            <person name="Hughes B."/>
            <person name="Huizar L."/>
            <person name="Hunter J.L."/>
            <person name="Jenkins J."/>
            <person name="Johnson-Hopson C."/>
            <person name="Khan S."/>
            <person name="Khaykin E."/>
            <person name="Kim C.J."/>
            <person name="Koo H.L."/>
            <person name="Kremenetskaia I."/>
            <person name="Kurtz D.B."/>
            <person name="Kwan A."/>
            <person name="Lam B."/>
            <person name="Langin-Hooper S."/>
            <person name="Lee A."/>
            <person name="Lee J.M."/>
            <person name="Lenz C.A."/>
            <person name="Li J.H."/>
            <person name="Li Y.-P."/>
            <person name="Lin X."/>
            <person name="Liu S.X."/>
            <person name="Liu Z.A."/>
            <person name="Luros J.S."/>
            <person name="Maiti R."/>
            <person name="Marziali A."/>
            <person name="Militscher J."/>
            <person name="Miranda M."/>
            <person name="Nguyen M."/>
            <person name="Nierman W.C."/>
            <person name="Osborne B.I."/>
            <person name="Pai G."/>
            <person name="Peterson J."/>
            <person name="Pham P.K."/>
            <person name="Rizzo M."/>
            <person name="Rooney T."/>
            <person name="Rowley D."/>
            <person name="Sakano H."/>
            <person name="Salzberg S.L."/>
            <person name="Schwartz J.R."/>
            <person name="Shinn P."/>
            <person name="Southwick A.M."/>
            <person name="Sun H."/>
            <person name="Tallon L.J."/>
            <person name="Tambunga G."/>
            <person name="Toriumi M.J."/>
            <person name="Town C.D."/>
            <person name="Utterback T."/>
            <person name="Van Aken S."/>
            <person name="Vaysberg M."/>
            <person name="Vysotskaia V.S."/>
            <person name="Walker M."/>
            <person name="Wu D."/>
            <person name="Yu G."/>
            <person name="Fraser C.M."/>
            <person name="Venter J.C."/>
            <person name="Davis R.W."/>
        </authorList>
    </citation>
    <scope>NUCLEOTIDE SEQUENCE [LARGE SCALE GENOMIC DNA]</scope>
    <source>
        <strain>cv. Columbia</strain>
    </source>
</reference>
<reference key="2">
    <citation type="journal article" date="2017" name="Plant J.">
        <title>Araport11: a complete reannotation of the Arabidopsis thaliana reference genome.</title>
        <authorList>
            <person name="Cheng C.Y."/>
            <person name="Krishnakumar V."/>
            <person name="Chan A.P."/>
            <person name="Thibaud-Nissen F."/>
            <person name="Schobel S."/>
            <person name="Town C.D."/>
        </authorList>
    </citation>
    <scope>GENOME REANNOTATION</scope>
    <source>
        <strain>cv. Columbia</strain>
    </source>
</reference>
<reference key="3">
    <citation type="submission" date="2006-07" db="EMBL/GenBank/DDBJ databases">
        <title>Large-scale analysis of RIKEN Arabidopsis full-length (RAFL) cDNAs.</title>
        <authorList>
            <person name="Totoki Y."/>
            <person name="Seki M."/>
            <person name="Ishida J."/>
            <person name="Nakajima M."/>
            <person name="Enju A."/>
            <person name="Kamiya A."/>
            <person name="Narusaka M."/>
            <person name="Shin-i T."/>
            <person name="Nakagawa M."/>
            <person name="Sakamoto N."/>
            <person name="Oishi K."/>
            <person name="Kohara Y."/>
            <person name="Kobayashi M."/>
            <person name="Toyoda A."/>
            <person name="Sakaki Y."/>
            <person name="Sakurai T."/>
            <person name="Iida K."/>
            <person name="Akiyama K."/>
            <person name="Satou M."/>
            <person name="Toyoda T."/>
            <person name="Konagaya A."/>
            <person name="Carninci P."/>
            <person name="Kawai J."/>
            <person name="Hayashizaki Y."/>
            <person name="Shinozaki K."/>
        </authorList>
    </citation>
    <scope>NUCLEOTIDE SEQUENCE [LARGE SCALE MRNA]</scope>
    <source>
        <strain>cv. Columbia</strain>
    </source>
</reference>
<reference key="4">
    <citation type="journal article" date="1991" name="Eur. J. Biochem.">
        <title>Arabidopsis thaliana H1 histones. Analysis of two members of a small gene family.</title>
        <authorList>
            <person name="Gantt J.S."/>
            <person name="Lenvik T.R."/>
        </authorList>
    </citation>
    <scope>NUCLEOTIDE SEQUENCE [GENOMIC DNA] OF 10-534</scope>
</reference>
<reference key="5">
    <citation type="submission" date="2006-08" db="EMBL/GenBank/DDBJ databases">
        <title>Arabidopsis ORF Clones.</title>
        <authorList>
            <person name="Quinitio C."/>
            <person name="Chen H."/>
            <person name="Kim C.J."/>
            <person name="Shinn P."/>
            <person name="Ecker J.R."/>
        </authorList>
    </citation>
    <scope>NUCLEOTIDE SEQUENCE [MRNA] OF 55-534</scope>
    <source>
        <strain>cv. Columbia</strain>
    </source>
</reference>
<reference key="6">
    <citation type="journal article" date="2019" name="Plant Physiol.">
        <title>Identification of the Arabidopsis calmodulin-dependent NAD+ kinase that sustains the elicitor-induced oxidative burst.</title>
        <authorList>
            <person name="Dell'Aglio E."/>
            <person name="Giustini C."/>
            <person name="Kraut A."/>
            <person name="Coute Y."/>
            <person name="Costa A."/>
            <person name="Decros G."/>
            <person name="Gibon Y."/>
            <person name="Mazars C."/>
            <person name="Matringe M."/>
            <person name="Finazzi G."/>
            <person name="Curien G."/>
        </authorList>
    </citation>
    <scope>FUNCTION</scope>
    <scope>CATALYTIC ACTIVITY</scope>
    <scope>COFACTOR</scope>
    <scope>BIOPHYSICOCHEMICAL PROPERTIES</scope>
    <scope>CALMODULIN-BINDIG</scope>
    <scope>SUBCELLULAR LOCATION</scope>
    <scope>DISRUPTION PHENOTYPE</scope>
</reference>
<dbReference type="EC" id="2.7.1.23" evidence="2"/>
<dbReference type="EMBL" id="AC000104">
    <property type="protein sequence ID" value="AAB70448.1"/>
    <property type="status" value="ALT_SEQ"/>
    <property type="molecule type" value="Genomic_DNA"/>
</dbReference>
<dbReference type="EMBL" id="CP002684">
    <property type="protein sequence ID" value="AEE27678.1"/>
    <property type="molecule type" value="Genomic_DNA"/>
</dbReference>
<dbReference type="EMBL" id="CP002684">
    <property type="protein sequence ID" value="ANM60529.1"/>
    <property type="status" value="ALT_SEQ"/>
    <property type="molecule type" value="Genomic_DNA"/>
</dbReference>
<dbReference type="EMBL" id="AK227002">
    <property type="protein sequence ID" value="BAE99067.1"/>
    <property type="molecule type" value="mRNA"/>
</dbReference>
<dbReference type="EMBL" id="X62461">
    <property type="protein sequence ID" value="CAA44318.1"/>
    <property type="molecule type" value="Genomic_DNA"/>
</dbReference>
<dbReference type="EMBL" id="BT026374">
    <property type="protein sequence ID" value="ABH04481.1"/>
    <property type="molecule type" value="mRNA"/>
</dbReference>
<dbReference type="RefSeq" id="NP_001322810.1">
    <property type="nucleotide sequence ID" value="NM_001331471.1"/>
</dbReference>
<dbReference type="RefSeq" id="NP_171924.2">
    <property type="nucleotide sequence ID" value="NM_100309.4"/>
</dbReference>
<dbReference type="FunCoup" id="Q0WUY1">
    <property type="interactions" value="161"/>
</dbReference>
<dbReference type="STRING" id="3702.Q0WUY1"/>
<dbReference type="iPTMnet" id="Q0WUY1"/>
<dbReference type="PaxDb" id="3702-AT1G04280.1"/>
<dbReference type="ProteomicsDB" id="177679"/>
<dbReference type="ProteomicsDB" id="192050"/>
<dbReference type="EnsemblPlants" id="AT1G04280.1">
    <property type="protein sequence ID" value="AT1G04280.1"/>
    <property type="gene ID" value="AT1G04280"/>
</dbReference>
<dbReference type="GeneID" id="839555"/>
<dbReference type="Gramene" id="AT1G04280.1">
    <property type="protein sequence ID" value="AT1G04280.1"/>
    <property type="gene ID" value="AT1G04280"/>
</dbReference>
<dbReference type="KEGG" id="ath:AT1G04280"/>
<dbReference type="Araport" id="AT1G04280"/>
<dbReference type="TAIR" id="AT1G04280">
    <property type="gene designation" value="NADKC"/>
</dbReference>
<dbReference type="eggNOG" id="ENOG502QPRV">
    <property type="taxonomic scope" value="Eukaryota"/>
</dbReference>
<dbReference type="HOGENOM" id="CLU_021671_0_0_1"/>
<dbReference type="InParanoid" id="Q0WUY1"/>
<dbReference type="PhylomeDB" id="Q0WUY1"/>
<dbReference type="PRO" id="PR:Q0WUY1"/>
<dbReference type="Proteomes" id="UP000006548">
    <property type="component" value="Chromosome 1"/>
</dbReference>
<dbReference type="ExpressionAtlas" id="Q0WUY1">
    <property type="expression patterns" value="baseline and differential"/>
</dbReference>
<dbReference type="GO" id="GO:0005741">
    <property type="term" value="C:mitochondrial outer membrane"/>
    <property type="evidence" value="ECO:0000314"/>
    <property type="project" value="TAIR"/>
</dbReference>
<dbReference type="GO" id="GO:0005524">
    <property type="term" value="F:ATP binding"/>
    <property type="evidence" value="ECO:0007669"/>
    <property type="project" value="UniProtKB-KW"/>
</dbReference>
<dbReference type="GO" id="GO:0005516">
    <property type="term" value="F:calmodulin binding"/>
    <property type="evidence" value="ECO:0000314"/>
    <property type="project" value="TAIR"/>
</dbReference>
<dbReference type="GO" id="GO:0003951">
    <property type="term" value="F:NAD+ kinase activity"/>
    <property type="evidence" value="ECO:0000314"/>
    <property type="project" value="TAIR"/>
</dbReference>
<dbReference type="GO" id="GO:0006741">
    <property type="term" value="P:NADP biosynthetic process"/>
    <property type="evidence" value="ECO:0000314"/>
    <property type="project" value="TAIR"/>
</dbReference>
<dbReference type="Gene3D" id="3.40.50.300">
    <property type="entry name" value="P-loop containing nucleotide triphosphate hydrolases"/>
    <property type="match status" value="1"/>
</dbReference>
<dbReference type="InterPro" id="IPR044802">
    <property type="entry name" value="NADKc-like"/>
</dbReference>
<dbReference type="InterPro" id="IPR027417">
    <property type="entry name" value="P-loop_NTPase"/>
</dbReference>
<dbReference type="InterPro" id="IPR010488">
    <property type="entry name" value="Zeta_toxin_domain"/>
</dbReference>
<dbReference type="PANTHER" id="PTHR31153">
    <property type="entry name" value="CALMODULIN CALCIUM-DEPENDENT NAD KINASE"/>
    <property type="match status" value="1"/>
</dbReference>
<dbReference type="PANTHER" id="PTHR31153:SF1">
    <property type="entry name" value="CALMODULIN CALCIUM-DEPENDENT NAD KINASE"/>
    <property type="match status" value="1"/>
</dbReference>
<dbReference type="Pfam" id="PF06414">
    <property type="entry name" value="Zeta_toxin"/>
    <property type="match status" value="1"/>
</dbReference>
<dbReference type="SUPFAM" id="SSF52540">
    <property type="entry name" value="P-loop containing nucleoside triphosphate hydrolases"/>
    <property type="match status" value="1"/>
</dbReference>
<organism>
    <name type="scientific">Arabidopsis thaliana</name>
    <name type="common">Mouse-ear cress</name>
    <dbReference type="NCBI Taxonomy" id="3702"/>
    <lineage>
        <taxon>Eukaryota</taxon>
        <taxon>Viridiplantae</taxon>
        <taxon>Streptophyta</taxon>
        <taxon>Embryophyta</taxon>
        <taxon>Tracheophyta</taxon>
        <taxon>Spermatophyta</taxon>
        <taxon>Magnoliopsida</taxon>
        <taxon>eudicotyledons</taxon>
        <taxon>Gunneridae</taxon>
        <taxon>Pentapetalae</taxon>
        <taxon>rosids</taxon>
        <taxon>malvids</taxon>
        <taxon>Brassicales</taxon>
        <taxon>Brassicaceae</taxon>
        <taxon>Camelineae</taxon>
        <taxon>Arabidopsis</taxon>
    </lineage>
</organism>
<sequence>MVKPLGEGTRDVSNVGCKSVDLLLASLGGLAAAVAAAYAGELLLRRRKLDQGASMGYKDVKIAPLIERKDSGRRSNLERFSHYVARQLGFEDPNEYPQLCKLANGYLLKTKGYDENVDEYLENEAERDSLYVHLLEEFDRCILTYFSFNWTQSSNLISQALSDESDQKVPKLKDFVMAATRKQRFERVTKDLKVKRVISTLVEEMRVIGSGSSEPHCTEVMSPVAHNKRSPVLLLMGGGMGAGKSTVLKDIFLESFWSEAQADAVVIEADAFKETDVIYRALSSRGHHDDMLQTAELVHQSSTDAASSLLVTALNDGRDVIMDGTLSWEPFVEQMIEMARNVHKQKYRMGEGYKVSEEGTITEKYWEEEEEETKENGKQQNLKPYRIELVGVVCDAYLAVARGIRRALMVKRAVRVKPQLNSHKRFANAFPKYCELVDNARLYCTNAVGGPPRLIAWKDGNSKLLVDPEDIDCLKRVSSLNPDAESIYELYPDPSQLSKPGSVWNDVVLVPSRPKVQKELSDAIRRIEKAQPKN</sequence>
<name>NADKC_ARATH</name>
<proteinExistence type="evidence at protein level"/>
<keyword id="KW-0067">ATP-binding</keyword>
<keyword id="KW-0112">Calmodulin-binding</keyword>
<keyword id="KW-0418">Kinase</keyword>
<keyword id="KW-0472">Membrane</keyword>
<keyword id="KW-0496">Mitochondrion</keyword>
<keyword id="KW-1000">Mitochondrion outer membrane</keyword>
<keyword id="KW-0547">Nucleotide-binding</keyword>
<keyword id="KW-1185">Reference proteome</keyword>
<keyword id="KW-0808">Transferase</keyword>
<protein>
    <recommendedName>
        <fullName evidence="4">Calmodulin calcium-dependent NAD kinase</fullName>
        <ecNumber evidence="2">2.7.1.23</ecNumber>
    </recommendedName>
    <alternativeName>
        <fullName evidence="3">NAD kinase-CaM dependent protein</fullName>
        <shortName evidence="3">NADKc</shortName>
    </alternativeName>
</protein>
<gene>
    <name evidence="3" type="primary">NADKC</name>
    <name type="synonym">H1FLK</name>
    <name evidence="5" type="ordered locus">At1g04280</name>
    <name evidence="6" type="ORF">F19P19.28</name>
</gene>